<keyword id="KW-0025">Alternative splicing</keyword>
<keyword id="KW-0175">Coiled coil</keyword>
<keyword id="KW-0963">Cytoplasm</keyword>
<keyword id="KW-0479">Metal-binding</keyword>
<keyword id="KW-0597">Phosphoprotein</keyword>
<keyword id="KW-1267">Proteomics identification</keyword>
<keyword id="KW-1185">Reference proteome</keyword>
<keyword id="KW-0808">Transferase</keyword>
<keyword id="KW-0833">Ubl conjugation pathway</keyword>
<keyword id="KW-0862">Zinc</keyword>
<keyword id="KW-0863">Zinc-finger</keyword>
<comment type="function">
    <text evidence="6 8">Negatively regulates MAP kinase activation by limiting the formation of Raf/MEK complexes probably by inactivation of the KSR1 scaffold protein. Also acts as a Ras responsive E3 ubiquitin ligase that, on activation of Ras, is modified by auto-polyubiquitination resulting in the release of inhibition of Raf/MEK complex formation. May also act as a cytoplasmic retention protein with a role in regulating nuclear transport.</text>
</comment>
<comment type="catalytic activity">
    <reaction evidence="6">
        <text>S-ubiquitinyl-[E2 ubiquitin-conjugating enzyme]-L-cysteine + [acceptor protein]-L-lysine = [E2 ubiquitin-conjugating enzyme]-L-cysteine + N(6)-ubiquitinyl-[acceptor protein]-L-lysine.</text>
        <dbReference type="EC" id="2.3.2.27"/>
    </reaction>
</comment>
<comment type="pathway">
    <text>Protein modification; protein ubiquitination.</text>
</comment>
<comment type="subunit">
    <text evidence="5 6 7">Interacts with the nuclear localization signal of BRCA1 and with the N-terminal of KSR1. The C-terminal portion of BCRA1 interacts with DDB1.</text>
</comment>
<comment type="interaction">
    <interactant intactId="EBI-349900">
        <id>Q7Z569</id>
    </interactant>
    <interactant intactId="EBI-9033101">
        <id>O75969</id>
        <label>AKAP3</label>
    </interactant>
    <organismsDiffer>false</organismsDiffer>
    <experiments>2</experiments>
</comment>
<comment type="interaction">
    <interactant intactId="EBI-349900">
        <id>Q7Z569</id>
    </interactant>
    <interactant intactId="EBI-349900">
        <id>Q7Z569</id>
        <label>BRAP</label>
    </interactant>
    <organismsDiffer>false</organismsDiffer>
    <experiments>2</experiments>
</comment>
<comment type="interaction">
    <interactant intactId="EBI-349900">
        <id>Q7Z569</id>
    </interactant>
    <interactant intactId="EBI-349905">
        <id>P38398</id>
        <label>BRCA1</label>
    </interactant>
    <organismsDiffer>false</organismsDiffer>
    <experiments>3</experiments>
</comment>
<comment type="interaction">
    <interactant intactId="EBI-349900">
        <id>Q7Z569</id>
    </interactant>
    <interactant intactId="EBI-743105">
        <id>Q5JVL4</id>
        <label>EFHC1</label>
    </interactant>
    <organismsDiffer>false</organismsDiffer>
    <experiments>3</experiments>
</comment>
<comment type="interaction">
    <interactant intactId="EBI-349900">
        <id>Q7Z569</id>
    </interactant>
    <interactant intactId="EBI-350145">
        <id>P01112</id>
        <label>HRAS</label>
    </interactant>
    <organismsDiffer>false</organismsDiffer>
    <experiments>3</experiments>
</comment>
<comment type="interaction">
    <interactant intactId="EBI-349900">
        <id>Q7Z569</id>
    </interactant>
    <interactant intactId="EBI-10300345">
        <id>Q9BW85</id>
        <label>YJU2</label>
    </interactant>
    <organismsDiffer>false</organismsDiffer>
    <experiments>3</experiments>
</comment>
<comment type="subcellular location">
    <subcellularLocation>
        <location evidence="7">Cytoplasm</location>
    </subcellularLocation>
</comment>
<comment type="alternative products">
    <event type="alternative splicing"/>
    <isoform>
        <id>Q7Z569-1</id>
        <name>1</name>
        <sequence type="displayed"/>
    </isoform>
    <isoform>
        <id>Q7Z569-2</id>
        <name>2</name>
        <sequence type="described" ref="VSP_055881 VSP_055882"/>
    </isoform>
</comment>
<comment type="tissue specificity">
    <text evidence="7">Expressed in breast epithelial cell lines.</text>
</comment>
<comment type="sequence caution" evidence="10">
    <conflict type="frameshift">
        <sequence resource="EMBL-CDS" id="AAC24200"/>
    </conflict>
</comment>
<organism evidence="11">
    <name type="scientific">Homo sapiens</name>
    <name type="common">Human</name>
    <dbReference type="NCBI Taxonomy" id="9606"/>
    <lineage>
        <taxon>Eukaryota</taxon>
        <taxon>Metazoa</taxon>
        <taxon>Chordata</taxon>
        <taxon>Craniata</taxon>
        <taxon>Vertebrata</taxon>
        <taxon>Euteleostomi</taxon>
        <taxon>Mammalia</taxon>
        <taxon>Eutheria</taxon>
        <taxon>Euarchontoglires</taxon>
        <taxon>Primates</taxon>
        <taxon>Haplorrhini</taxon>
        <taxon>Catarrhini</taxon>
        <taxon>Hominidae</taxon>
        <taxon>Homo</taxon>
    </lineage>
</organism>
<dbReference type="EC" id="2.3.2.27" evidence="6"/>
<dbReference type="EMBL" id="AF035620">
    <property type="protein sequence ID" value="AAC24200.1"/>
    <property type="status" value="ALT_FRAME"/>
    <property type="molecule type" value="mRNA"/>
</dbReference>
<dbReference type="EMBL" id="AY332222">
    <property type="protein sequence ID" value="AAP93638.1"/>
    <property type="molecule type" value="mRNA"/>
</dbReference>
<dbReference type="EMBL" id="AK299326">
    <property type="protein sequence ID" value="BAG61333.1"/>
    <property type="molecule type" value="mRNA"/>
</dbReference>
<dbReference type="EMBL" id="AC002996">
    <property type="status" value="NOT_ANNOTATED_CDS"/>
    <property type="molecule type" value="Genomic_DNA"/>
</dbReference>
<dbReference type="EMBL" id="AC137055">
    <property type="status" value="NOT_ANNOTATED_CDS"/>
    <property type="molecule type" value="Genomic_DNA"/>
</dbReference>
<dbReference type="EMBL" id="CH471054">
    <property type="protein sequence ID" value="EAW97972.1"/>
    <property type="molecule type" value="Genomic_DNA"/>
</dbReference>
<dbReference type="EMBL" id="BC136698">
    <property type="protein sequence ID" value="AAI36699.1"/>
    <property type="molecule type" value="mRNA"/>
</dbReference>
<dbReference type="EMBL" id="BC136699">
    <property type="protein sequence ID" value="AAI36700.1"/>
    <property type="molecule type" value="mRNA"/>
</dbReference>
<dbReference type="EMBL" id="AF035950">
    <property type="protein sequence ID" value="AAB88538.1"/>
    <property type="molecule type" value="mRNA"/>
</dbReference>
<dbReference type="CCDS" id="CCDS9154.1">
    <molecule id="Q7Z569-1"/>
</dbReference>
<dbReference type="RefSeq" id="NP_006759.3">
    <molecule id="Q7Z569-1"/>
    <property type="nucleotide sequence ID" value="NM_006768.4"/>
</dbReference>
<dbReference type="SMR" id="Q7Z569"/>
<dbReference type="BioGRID" id="113912">
    <property type="interactions" value="103"/>
</dbReference>
<dbReference type="FunCoup" id="Q7Z569">
    <property type="interactions" value="4212"/>
</dbReference>
<dbReference type="IntAct" id="Q7Z569">
    <property type="interactions" value="48"/>
</dbReference>
<dbReference type="MINT" id="Q7Z569"/>
<dbReference type="STRING" id="9606.ENSP00000403524"/>
<dbReference type="BindingDB" id="Q7Z569"/>
<dbReference type="ChEMBL" id="CHEMBL5291566"/>
<dbReference type="GlyGen" id="Q7Z569">
    <property type="glycosylation" value="1 site, 1 O-linked glycan (1 site)"/>
</dbReference>
<dbReference type="iPTMnet" id="Q7Z569"/>
<dbReference type="MetOSite" id="Q7Z569"/>
<dbReference type="PhosphoSitePlus" id="Q7Z569"/>
<dbReference type="BioMuta" id="BRAP"/>
<dbReference type="DMDM" id="296434410"/>
<dbReference type="jPOST" id="Q7Z569"/>
<dbReference type="MassIVE" id="Q7Z569"/>
<dbReference type="PaxDb" id="9606-ENSP00000403524"/>
<dbReference type="PeptideAtlas" id="Q7Z569"/>
<dbReference type="ProteomicsDB" id="4961"/>
<dbReference type="ProteomicsDB" id="69260">
    <molecule id="Q7Z569-1"/>
</dbReference>
<dbReference type="Pumba" id="Q7Z569"/>
<dbReference type="Antibodypedia" id="31107">
    <property type="antibodies" value="193 antibodies from 30 providers"/>
</dbReference>
<dbReference type="DNASU" id="8315"/>
<dbReference type="Ensembl" id="ENST00000419234.9">
    <molecule id="Q7Z569-1"/>
    <property type="protein sequence ID" value="ENSP00000403524.3"/>
    <property type="gene ID" value="ENSG00000089234.16"/>
</dbReference>
<dbReference type="GeneID" id="8315"/>
<dbReference type="KEGG" id="hsa:8315"/>
<dbReference type="MANE-Select" id="ENST00000419234.9">
    <property type="protein sequence ID" value="ENSP00000403524.3"/>
    <property type="RefSeq nucleotide sequence ID" value="NM_006768.5"/>
    <property type="RefSeq protein sequence ID" value="NP_006759.3"/>
</dbReference>
<dbReference type="UCSC" id="uc001tsn.4">
    <molecule id="Q7Z569-1"/>
    <property type="organism name" value="human"/>
</dbReference>
<dbReference type="AGR" id="HGNC:1099"/>
<dbReference type="CTD" id="8315"/>
<dbReference type="DisGeNET" id="8315"/>
<dbReference type="GeneCards" id="BRAP"/>
<dbReference type="HGNC" id="HGNC:1099">
    <property type="gene designation" value="BRAP"/>
</dbReference>
<dbReference type="HPA" id="ENSG00000089234">
    <property type="expression patterns" value="Tissue enhanced (testis)"/>
</dbReference>
<dbReference type="MIM" id="604986">
    <property type="type" value="gene"/>
</dbReference>
<dbReference type="neXtProt" id="NX_Q7Z569"/>
<dbReference type="OpenTargets" id="ENSG00000089234"/>
<dbReference type="PharmGKB" id="PA25410"/>
<dbReference type="VEuPathDB" id="HostDB:ENSG00000089234"/>
<dbReference type="eggNOG" id="KOG0804">
    <property type="taxonomic scope" value="Eukaryota"/>
</dbReference>
<dbReference type="GeneTree" id="ENSGT00500000044909"/>
<dbReference type="InParanoid" id="Q7Z569"/>
<dbReference type="OMA" id="RFNSIEP"/>
<dbReference type="OrthoDB" id="273556at2759"/>
<dbReference type="PAN-GO" id="Q7Z569">
    <property type="GO annotations" value="4 GO annotations based on evolutionary models"/>
</dbReference>
<dbReference type="PhylomeDB" id="Q7Z569"/>
<dbReference type="TreeFam" id="TF313622"/>
<dbReference type="PathwayCommons" id="Q7Z569"/>
<dbReference type="Reactome" id="R-HSA-5673000">
    <property type="pathway name" value="RAF activation"/>
</dbReference>
<dbReference type="Reactome" id="R-HSA-5675221">
    <property type="pathway name" value="Negative regulation of MAPK pathway"/>
</dbReference>
<dbReference type="Reactome" id="R-HSA-6802946">
    <property type="pathway name" value="Signaling by moderate kinase activity BRAF mutants"/>
</dbReference>
<dbReference type="Reactome" id="R-HSA-6802955">
    <property type="pathway name" value="Paradoxical activation of RAF signaling by kinase inactive BRAF"/>
</dbReference>
<dbReference type="Reactome" id="R-HSA-9649948">
    <property type="pathway name" value="Signaling downstream of RAS mutants"/>
</dbReference>
<dbReference type="SignaLink" id="Q7Z569"/>
<dbReference type="SIGNOR" id="Q7Z569"/>
<dbReference type="UniPathway" id="UPA00143"/>
<dbReference type="BioGRID-ORCS" id="8315">
    <property type="hits" value="117 hits in 1202 CRISPR screens"/>
</dbReference>
<dbReference type="ChiTaRS" id="BRAP">
    <property type="organism name" value="human"/>
</dbReference>
<dbReference type="GenomeRNAi" id="8315"/>
<dbReference type="Pharos" id="Q7Z569">
    <property type="development level" value="Tbio"/>
</dbReference>
<dbReference type="PRO" id="PR:Q7Z569"/>
<dbReference type="Proteomes" id="UP000005640">
    <property type="component" value="Chromosome 12"/>
</dbReference>
<dbReference type="RNAct" id="Q7Z569">
    <property type="molecule type" value="protein"/>
</dbReference>
<dbReference type="Bgee" id="ENSG00000089234">
    <property type="expression patterns" value="Expressed in left testis and 207 other cell types or tissues"/>
</dbReference>
<dbReference type="ExpressionAtlas" id="Q7Z569">
    <property type="expression patterns" value="baseline and differential"/>
</dbReference>
<dbReference type="GO" id="GO:0005737">
    <property type="term" value="C:cytoplasm"/>
    <property type="evidence" value="ECO:0000314"/>
    <property type="project" value="UniProtKB"/>
</dbReference>
<dbReference type="GO" id="GO:0005829">
    <property type="term" value="C:cytosol"/>
    <property type="evidence" value="ECO:0000314"/>
    <property type="project" value="HPA"/>
</dbReference>
<dbReference type="GO" id="GO:0031965">
    <property type="term" value="C:nuclear membrane"/>
    <property type="evidence" value="ECO:0000314"/>
    <property type="project" value="HPA"/>
</dbReference>
<dbReference type="GO" id="GO:0005654">
    <property type="term" value="C:nucleoplasm"/>
    <property type="evidence" value="ECO:0000314"/>
    <property type="project" value="HPA"/>
</dbReference>
<dbReference type="GO" id="GO:0000151">
    <property type="term" value="C:ubiquitin ligase complex"/>
    <property type="evidence" value="ECO:0000314"/>
    <property type="project" value="MGI"/>
</dbReference>
<dbReference type="GO" id="GO:0042802">
    <property type="term" value="F:identical protein binding"/>
    <property type="evidence" value="ECO:0000353"/>
    <property type="project" value="IntAct"/>
</dbReference>
<dbReference type="GO" id="GO:0008139">
    <property type="term" value="F:nuclear localization sequence binding"/>
    <property type="evidence" value="ECO:0000314"/>
    <property type="project" value="MGI"/>
</dbReference>
<dbReference type="GO" id="GO:0003676">
    <property type="term" value="F:nucleic acid binding"/>
    <property type="evidence" value="ECO:0007669"/>
    <property type="project" value="InterPro"/>
</dbReference>
<dbReference type="GO" id="GO:0061630">
    <property type="term" value="F:ubiquitin protein ligase activity"/>
    <property type="evidence" value="ECO:0000314"/>
    <property type="project" value="MGI"/>
</dbReference>
<dbReference type="GO" id="GO:0004842">
    <property type="term" value="F:ubiquitin-protein transferase activity"/>
    <property type="evidence" value="ECO:0000314"/>
    <property type="project" value="UniProtKB"/>
</dbReference>
<dbReference type="GO" id="GO:0008270">
    <property type="term" value="F:zinc ion binding"/>
    <property type="evidence" value="ECO:0007669"/>
    <property type="project" value="UniProtKB-KW"/>
</dbReference>
<dbReference type="GO" id="GO:0000165">
    <property type="term" value="P:MAPK cascade"/>
    <property type="evidence" value="ECO:0000314"/>
    <property type="project" value="MGI"/>
</dbReference>
<dbReference type="GO" id="GO:0009968">
    <property type="term" value="P:negative regulation of signal transduction"/>
    <property type="evidence" value="ECO:0000314"/>
    <property type="project" value="UniProtKB"/>
</dbReference>
<dbReference type="GO" id="GO:0016567">
    <property type="term" value="P:protein ubiquitination"/>
    <property type="evidence" value="ECO:0000314"/>
    <property type="project" value="FlyBase"/>
</dbReference>
<dbReference type="GO" id="GO:0007265">
    <property type="term" value="P:Ras protein signal transduction"/>
    <property type="evidence" value="ECO:0000314"/>
    <property type="project" value="MGI"/>
</dbReference>
<dbReference type="CDD" id="cd16457">
    <property type="entry name" value="RING-H2_BRAP2"/>
    <property type="match status" value="1"/>
</dbReference>
<dbReference type="CDD" id="cd12718">
    <property type="entry name" value="RRM_BRAP2"/>
    <property type="match status" value="1"/>
</dbReference>
<dbReference type="FunFam" id="3.30.40.10:FF:000206">
    <property type="entry name" value="BRCA1-associated protein isoform X1"/>
    <property type="match status" value="1"/>
</dbReference>
<dbReference type="FunFam" id="3.30.40.10:FF:000159">
    <property type="entry name" value="BRCA1-associated protein-like"/>
    <property type="match status" value="1"/>
</dbReference>
<dbReference type="Gene3D" id="3.30.40.10">
    <property type="entry name" value="Zinc/RING finger domain, C3HC4 (zinc finger)"/>
    <property type="match status" value="2"/>
</dbReference>
<dbReference type="InterPro" id="IPR011422">
    <property type="entry name" value="BRAP2/ETP1_RRM"/>
</dbReference>
<dbReference type="InterPro" id="IPR034932">
    <property type="entry name" value="BRAP2_RRM"/>
</dbReference>
<dbReference type="InterPro" id="IPR035979">
    <property type="entry name" value="RBD_domain_sf"/>
</dbReference>
<dbReference type="InterPro" id="IPR047243">
    <property type="entry name" value="RING-H2_BRAP2"/>
</dbReference>
<dbReference type="InterPro" id="IPR001841">
    <property type="entry name" value="Znf_RING"/>
</dbReference>
<dbReference type="InterPro" id="IPR013083">
    <property type="entry name" value="Znf_RING/FYVE/PHD"/>
</dbReference>
<dbReference type="InterPro" id="IPR001607">
    <property type="entry name" value="Znf_UBP"/>
</dbReference>
<dbReference type="PANTHER" id="PTHR24007">
    <property type="entry name" value="BRCA1-ASSOCIATED PROTEIN"/>
    <property type="match status" value="1"/>
</dbReference>
<dbReference type="PANTHER" id="PTHR24007:SF7">
    <property type="entry name" value="BRCA1-ASSOCIATED PROTEIN"/>
    <property type="match status" value="1"/>
</dbReference>
<dbReference type="Pfam" id="PF07576">
    <property type="entry name" value="BRAP2"/>
    <property type="match status" value="1"/>
</dbReference>
<dbReference type="Pfam" id="PF13639">
    <property type="entry name" value="zf-RING_2"/>
    <property type="match status" value="1"/>
</dbReference>
<dbReference type="Pfam" id="PF02148">
    <property type="entry name" value="zf-UBP"/>
    <property type="match status" value="1"/>
</dbReference>
<dbReference type="SMART" id="SM00184">
    <property type="entry name" value="RING"/>
    <property type="match status" value="1"/>
</dbReference>
<dbReference type="SMART" id="SM00290">
    <property type="entry name" value="ZnF_UBP"/>
    <property type="match status" value="1"/>
</dbReference>
<dbReference type="SUPFAM" id="SSF57850">
    <property type="entry name" value="RING/U-box"/>
    <property type="match status" value="2"/>
</dbReference>
<dbReference type="SUPFAM" id="SSF54928">
    <property type="entry name" value="RNA-binding domain, RBD"/>
    <property type="match status" value="1"/>
</dbReference>
<dbReference type="PROSITE" id="PS50089">
    <property type="entry name" value="ZF_RING_2"/>
    <property type="match status" value="1"/>
</dbReference>
<dbReference type="PROSITE" id="PS50271">
    <property type="entry name" value="ZF_UBP"/>
    <property type="match status" value="1"/>
</dbReference>
<accession>Q7Z569</accession>
<accession>B4DRM1</accession>
<accession>B9EGS8</accession>
<accession>O43238</accession>
<accession>O75341</accession>
<evidence type="ECO:0000255" key="1"/>
<evidence type="ECO:0000255" key="2">
    <source>
        <dbReference type="PROSITE-ProRule" id="PRU00175"/>
    </source>
</evidence>
<evidence type="ECO:0000255" key="3">
    <source>
        <dbReference type="PROSITE-ProRule" id="PRU00502"/>
    </source>
</evidence>
<evidence type="ECO:0000256" key="4">
    <source>
        <dbReference type="SAM" id="MobiDB-lite"/>
    </source>
</evidence>
<evidence type="ECO:0000269" key="5">
    <source>
    </source>
</evidence>
<evidence type="ECO:0000269" key="6">
    <source>
    </source>
</evidence>
<evidence type="ECO:0000269" key="7">
    <source>
    </source>
</evidence>
<evidence type="ECO:0000303" key="8">
    <source>
    </source>
</evidence>
<evidence type="ECO:0000303" key="9">
    <source>
    </source>
</evidence>
<evidence type="ECO:0000305" key="10"/>
<evidence type="ECO:0000312" key="11">
    <source>
        <dbReference type="EMBL" id="AAP93638.1"/>
    </source>
</evidence>
<evidence type="ECO:0000312" key="12">
    <source>
        <dbReference type="HGNC" id="HGNC:1099"/>
    </source>
</evidence>
<evidence type="ECO:0007744" key="13">
    <source>
    </source>
</evidence>
<evidence type="ECO:0007744" key="14">
    <source>
    </source>
</evidence>
<evidence type="ECO:0007744" key="15">
    <source>
    </source>
</evidence>
<reference key="1">
    <citation type="journal article" date="1998" name="J. Biol. Chem.">
        <title>Identification of a novel cytoplasmic protein that specifically binds to nuclear localization signal motifs.</title>
        <authorList>
            <person name="Li S."/>
            <person name="Ku C.-Y."/>
            <person name="Farmer A.A."/>
            <person name="Cong Y.-S."/>
            <person name="Chen C.-F."/>
            <person name="Lee W.-H."/>
        </authorList>
    </citation>
    <scope>NUCLEOTIDE SEQUENCE [MRNA] (ISOFORM 1)</scope>
    <scope>SUBCELLULAR LOCATION</scope>
    <scope>TISSUE SPECIFICITY</scope>
    <scope>INTERACTION WITH BRCA1</scope>
    <source>
        <tissue evidence="7">Fibroblast</tissue>
    </source>
</reference>
<reference key="2">
    <citation type="journal article" date="2004" name="Nature">
        <title>Ras regulates assembly of mitogenic signalling complexes through the effector protein IMP.</title>
        <authorList>
            <person name="Matheny S.A."/>
            <person name="Chen C."/>
            <person name="Kortum R.L."/>
            <person name="Razidlo G.L."/>
            <person name="Lewis R.E."/>
            <person name="White M.A."/>
        </authorList>
    </citation>
    <scope>NUCLEOTIDE SEQUENCE [MRNA] (ISOFORM 1)</scope>
    <scope>FUNCTION</scope>
    <scope>CATALYTIC ACTIVITY</scope>
    <scope>MUTAGENESIS OF CYS-264</scope>
    <scope>INTERACTION WITH KSR1</scope>
    <source>
        <tissue evidence="6">T-cell</tissue>
    </source>
</reference>
<reference key="3">
    <citation type="journal article" date="2004" name="Nat. Genet.">
        <title>Complete sequencing and characterization of 21,243 full-length human cDNAs.</title>
        <authorList>
            <person name="Ota T."/>
            <person name="Suzuki Y."/>
            <person name="Nishikawa T."/>
            <person name="Otsuki T."/>
            <person name="Sugiyama T."/>
            <person name="Irie R."/>
            <person name="Wakamatsu A."/>
            <person name="Hayashi K."/>
            <person name="Sato H."/>
            <person name="Nagai K."/>
            <person name="Kimura K."/>
            <person name="Makita H."/>
            <person name="Sekine M."/>
            <person name="Obayashi M."/>
            <person name="Nishi T."/>
            <person name="Shibahara T."/>
            <person name="Tanaka T."/>
            <person name="Ishii S."/>
            <person name="Yamamoto J."/>
            <person name="Saito K."/>
            <person name="Kawai Y."/>
            <person name="Isono Y."/>
            <person name="Nakamura Y."/>
            <person name="Nagahari K."/>
            <person name="Murakami K."/>
            <person name="Yasuda T."/>
            <person name="Iwayanagi T."/>
            <person name="Wagatsuma M."/>
            <person name="Shiratori A."/>
            <person name="Sudo H."/>
            <person name="Hosoiri T."/>
            <person name="Kaku Y."/>
            <person name="Kodaira H."/>
            <person name="Kondo H."/>
            <person name="Sugawara M."/>
            <person name="Takahashi M."/>
            <person name="Kanda K."/>
            <person name="Yokoi T."/>
            <person name="Furuya T."/>
            <person name="Kikkawa E."/>
            <person name="Omura Y."/>
            <person name="Abe K."/>
            <person name="Kamihara K."/>
            <person name="Katsuta N."/>
            <person name="Sato K."/>
            <person name="Tanikawa M."/>
            <person name="Yamazaki M."/>
            <person name="Ninomiya K."/>
            <person name="Ishibashi T."/>
            <person name="Yamashita H."/>
            <person name="Murakawa K."/>
            <person name="Fujimori K."/>
            <person name="Tanai H."/>
            <person name="Kimata M."/>
            <person name="Watanabe M."/>
            <person name="Hiraoka S."/>
            <person name="Chiba Y."/>
            <person name="Ishida S."/>
            <person name="Ono Y."/>
            <person name="Takiguchi S."/>
            <person name="Watanabe S."/>
            <person name="Yosida M."/>
            <person name="Hotuta T."/>
            <person name="Kusano J."/>
            <person name="Kanehori K."/>
            <person name="Takahashi-Fujii A."/>
            <person name="Hara H."/>
            <person name="Tanase T.-O."/>
            <person name="Nomura Y."/>
            <person name="Togiya S."/>
            <person name="Komai F."/>
            <person name="Hara R."/>
            <person name="Takeuchi K."/>
            <person name="Arita M."/>
            <person name="Imose N."/>
            <person name="Musashino K."/>
            <person name="Yuuki H."/>
            <person name="Oshima A."/>
            <person name="Sasaki N."/>
            <person name="Aotsuka S."/>
            <person name="Yoshikawa Y."/>
            <person name="Matsunawa H."/>
            <person name="Ichihara T."/>
            <person name="Shiohata N."/>
            <person name="Sano S."/>
            <person name="Moriya S."/>
            <person name="Momiyama H."/>
            <person name="Satoh N."/>
            <person name="Takami S."/>
            <person name="Terashima Y."/>
            <person name="Suzuki O."/>
            <person name="Nakagawa S."/>
            <person name="Senoh A."/>
            <person name="Mizoguchi H."/>
            <person name="Goto Y."/>
            <person name="Shimizu F."/>
            <person name="Wakebe H."/>
            <person name="Hishigaki H."/>
            <person name="Watanabe T."/>
            <person name="Sugiyama A."/>
            <person name="Takemoto M."/>
            <person name="Kawakami B."/>
            <person name="Yamazaki M."/>
            <person name="Watanabe K."/>
            <person name="Kumagai A."/>
            <person name="Itakura S."/>
            <person name="Fukuzumi Y."/>
            <person name="Fujimori Y."/>
            <person name="Komiyama M."/>
            <person name="Tashiro H."/>
            <person name="Tanigami A."/>
            <person name="Fujiwara T."/>
            <person name="Ono T."/>
            <person name="Yamada K."/>
            <person name="Fujii Y."/>
            <person name="Ozaki K."/>
            <person name="Hirao M."/>
            <person name="Ohmori Y."/>
            <person name="Kawabata A."/>
            <person name="Hikiji T."/>
            <person name="Kobatake N."/>
            <person name="Inagaki H."/>
            <person name="Ikema Y."/>
            <person name="Okamoto S."/>
            <person name="Okitani R."/>
            <person name="Kawakami T."/>
            <person name="Noguchi S."/>
            <person name="Itoh T."/>
            <person name="Shigeta K."/>
            <person name="Senba T."/>
            <person name="Matsumura K."/>
            <person name="Nakajima Y."/>
            <person name="Mizuno T."/>
            <person name="Morinaga M."/>
            <person name="Sasaki M."/>
            <person name="Togashi T."/>
            <person name="Oyama M."/>
            <person name="Hata H."/>
            <person name="Watanabe M."/>
            <person name="Komatsu T."/>
            <person name="Mizushima-Sugano J."/>
            <person name="Satoh T."/>
            <person name="Shirai Y."/>
            <person name="Takahashi Y."/>
            <person name="Nakagawa K."/>
            <person name="Okumura K."/>
            <person name="Nagase T."/>
            <person name="Nomura N."/>
            <person name="Kikuchi H."/>
            <person name="Masuho Y."/>
            <person name="Yamashita R."/>
            <person name="Nakai K."/>
            <person name="Yada T."/>
            <person name="Nakamura Y."/>
            <person name="Ohara O."/>
            <person name="Isogai T."/>
            <person name="Sugano S."/>
        </authorList>
    </citation>
    <scope>NUCLEOTIDE SEQUENCE [LARGE SCALE MRNA] (ISOFORM 2)</scope>
</reference>
<reference key="4">
    <citation type="journal article" date="2006" name="Nature">
        <title>The finished DNA sequence of human chromosome 12.</title>
        <authorList>
            <person name="Scherer S.E."/>
            <person name="Muzny D.M."/>
            <person name="Buhay C.J."/>
            <person name="Chen R."/>
            <person name="Cree A."/>
            <person name="Ding Y."/>
            <person name="Dugan-Rocha S."/>
            <person name="Gill R."/>
            <person name="Gunaratne P."/>
            <person name="Harris R.A."/>
            <person name="Hawes A.C."/>
            <person name="Hernandez J."/>
            <person name="Hodgson A.V."/>
            <person name="Hume J."/>
            <person name="Jackson A."/>
            <person name="Khan Z.M."/>
            <person name="Kovar-Smith C."/>
            <person name="Lewis L.R."/>
            <person name="Lozado R.J."/>
            <person name="Metzker M.L."/>
            <person name="Milosavljevic A."/>
            <person name="Miner G.R."/>
            <person name="Montgomery K.T."/>
            <person name="Morgan M.B."/>
            <person name="Nazareth L.V."/>
            <person name="Scott G."/>
            <person name="Sodergren E."/>
            <person name="Song X.-Z."/>
            <person name="Steffen D."/>
            <person name="Lovering R.C."/>
            <person name="Wheeler D.A."/>
            <person name="Worley K.C."/>
            <person name="Yuan Y."/>
            <person name="Zhang Z."/>
            <person name="Adams C.Q."/>
            <person name="Ansari-Lari M.A."/>
            <person name="Ayele M."/>
            <person name="Brown M.J."/>
            <person name="Chen G."/>
            <person name="Chen Z."/>
            <person name="Clerc-Blankenburg K.P."/>
            <person name="Davis C."/>
            <person name="Delgado O."/>
            <person name="Dinh H.H."/>
            <person name="Draper H."/>
            <person name="Gonzalez-Garay M.L."/>
            <person name="Havlak P."/>
            <person name="Jackson L.R."/>
            <person name="Jacob L.S."/>
            <person name="Kelly S.H."/>
            <person name="Li L."/>
            <person name="Li Z."/>
            <person name="Liu J."/>
            <person name="Liu W."/>
            <person name="Lu J."/>
            <person name="Maheshwari M."/>
            <person name="Nguyen B.-V."/>
            <person name="Okwuonu G.O."/>
            <person name="Pasternak S."/>
            <person name="Perez L.M."/>
            <person name="Plopper F.J.H."/>
            <person name="Santibanez J."/>
            <person name="Shen H."/>
            <person name="Tabor P.E."/>
            <person name="Verduzco D."/>
            <person name="Waldron L."/>
            <person name="Wang Q."/>
            <person name="Williams G.A."/>
            <person name="Zhang J."/>
            <person name="Zhou J."/>
            <person name="Allen C.C."/>
            <person name="Amin A.G."/>
            <person name="Anyalebechi V."/>
            <person name="Bailey M."/>
            <person name="Barbaria J.A."/>
            <person name="Bimage K.E."/>
            <person name="Bryant N.P."/>
            <person name="Burch P.E."/>
            <person name="Burkett C.E."/>
            <person name="Burrell K.L."/>
            <person name="Calderon E."/>
            <person name="Cardenas V."/>
            <person name="Carter K."/>
            <person name="Casias K."/>
            <person name="Cavazos I."/>
            <person name="Cavazos S.R."/>
            <person name="Ceasar H."/>
            <person name="Chacko J."/>
            <person name="Chan S.N."/>
            <person name="Chavez D."/>
            <person name="Christopoulos C."/>
            <person name="Chu J."/>
            <person name="Cockrell R."/>
            <person name="Cox C.D."/>
            <person name="Dang M."/>
            <person name="Dathorne S.R."/>
            <person name="David R."/>
            <person name="Davis C.M."/>
            <person name="Davy-Carroll L."/>
            <person name="Deshazo D.R."/>
            <person name="Donlin J.E."/>
            <person name="D'Souza L."/>
            <person name="Eaves K.A."/>
            <person name="Egan A."/>
            <person name="Emery-Cohen A.J."/>
            <person name="Escotto M."/>
            <person name="Flagg N."/>
            <person name="Forbes L.D."/>
            <person name="Gabisi A.M."/>
            <person name="Garza M."/>
            <person name="Hamilton C."/>
            <person name="Henderson N."/>
            <person name="Hernandez O."/>
            <person name="Hines S."/>
            <person name="Hogues M.E."/>
            <person name="Huang M."/>
            <person name="Idlebird D.G."/>
            <person name="Johnson R."/>
            <person name="Jolivet A."/>
            <person name="Jones S."/>
            <person name="Kagan R."/>
            <person name="King L.M."/>
            <person name="Leal B."/>
            <person name="Lebow H."/>
            <person name="Lee S."/>
            <person name="LeVan J.M."/>
            <person name="Lewis L.C."/>
            <person name="London P."/>
            <person name="Lorensuhewa L.M."/>
            <person name="Loulseged H."/>
            <person name="Lovett D.A."/>
            <person name="Lucier A."/>
            <person name="Lucier R.L."/>
            <person name="Ma J."/>
            <person name="Madu R.C."/>
            <person name="Mapua P."/>
            <person name="Martindale A.D."/>
            <person name="Martinez E."/>
            <person name="Massey E."/>
            <person name="Mawhiney S."/>
            <person name="Meador M.G."/>
            <person name="Mendez S."/>
            <person name="Mercado C."/>
            <person name="Mercado I.C."/>
            <person name="Merritt C.E."/>
            <person name="Miner Z.L."/>
            <person name="Minja E."/>
            <person name="Mitchell T."/>
            <person name="Mohabbat F."/>
            <person name="Mohabbat K."/>
            <person name="Montgomery B."/>
            <person name="Moore N."/>
            <person name="Morris S."/>
            <person name="Munidasa M."/>
            <person name="Ngo R.N."/>
            <person name="Nguyen N.B."/>
            <person name="Nickerson E."/>
            <person name="Nwaokelemeh O.O."/>
            <person name="Nwokenkwo S."/>
            <person name="Obregon M."/>
            <person name="Oguh M."/>
            <person name="Oragunye N."/>
            <person name="Oviedo R.J."/>
            <person name="Parish B.J."/>
            <person name="Parker D.N."/>
            <person name="Parrish J."/>
            <person name="Parks K.L."/>
            <person name="Paul H.A."/>
            <person name="Payton B.A."/>
            <person name="Perez A."/>
            <person name="Perrin W."/>
            <person name="Pickens A."/>
            <person name="Primus E.L."/>
            <person name="Pu L.-L."/>
            <person name="Puazo M."/>
            <person name="Quiles M.M."/>
            <person name="Quiroz J.B."/>
            <person name="Rabata D."/>
            <person name="Reeves K."/>
            <person name="Ruiz S.J."/>
            <person name="Shao H."/>
            <person name="Sisson I."/>
            <person name="Sonaike T."/>
            <person name="Sorelle R.P."/>
            <person name="Sutton A.E."/>
            <person name="Svatek A.F."/>
            <person name="Svetz L.A."/>
            <person name="Tamerisa K.S."/>
            <person name="Taylor T.R."/>
            <person name="Teague B."/>
            <person name="Thomas N."/>
            <person name="Thorn R.D."/>
            <person name="Trejos Z.Y."/>
            <person name="Trevino B.K."/>
            <person name="Ukegbu O.N."/>
            <person name="Urban J.B."/>
            <person name="Vasquez L.I."/>
            <person name="Vera V.A."/>
            <person name="Villasana D.M."/>
            <person name="Wang L."/>
            <person name="Ward-Moore S."/>
            <person name="Warren J.T."/>
            <person name="Wei X."/>
            <person name="White F."/>
            <person name="Williamson A.L."/>
            <person name="Wleczyk R."/>
            <person name="Wooden H.S."/>
            <person name="Wooden S.H."/>
            <person name="Yen J."/>
            <person name="Yoon L."/>
            <person name="Yoon V."/>
            <person name="Zorrilla S.E."/>
            <person name="Nelson D."/>
            <person name="Kucherlapati R."/>
            <person name="Weinstock G."/>
            <person name="Gibbs R.A."/>
        </authorList>
    </citation>
    <scope>NUCLEOTIDE SEQUENCE [LARGE SCALE GENOMIC DNA]</scope>
</reference>
<reference key="5">
    <citation type="submission" date="2005-07" db="EMBL/GenBank/DDBJ databases">
        <authorList>
            <person name="Mural R.J."/>
            <person name="Istrail S."/>
            <person name="Sutton G.G."/>
            <person name="Florea L."/>
            <person name="Halpern A.L."/>
            <person name="Mobarry C.M."/>
            <person name="Lippert R."/>
            <person name="Walenz B."/>
            <person name="Shatkay H."/>
            <person name="Dew I."/>
            <person name="Miller J.R."/>
            <person name="Flanigan M.J."/>
            <person name="Edwards N.J."/>
            <person name="Bolanos R."/>
            <person name="Fasulo D."/>
            <person name="Halldorsson B.V."/>
            <person name="Hannenhalli S."/>
            <person name="Turner R."/>
            <person name="Yooseph S."/>
            <person name="Lu F."/>
            <person name="Nusskern D.R."/>
            <person name="Shue B.C."/>
            <person name="Zheng X.H."/>
            <person name="Zhong F."/>
            <person name="Delcher A.L."/>
            <person name="Huson D.H."/>
            <person name="Kravitz S.A."/>
            <person name="Mouchard L."/>
            <person name="Reinert K."/>
            <person name="Remington K.A."/>
            <person name="Clark A.G."/>
            <person name="Waterman M.S."/>
            <person name="Eichler E.E."/>
            <person name="Adams M.D."/>
            <person name="Hunkapiller M.W."/>
            <person name="Myers E.W."/>
            <person name="Venter J.C."/>
        </authorList>
    </citation>
    <scope>NUCLEOTIDE SEQUENCE [LARGE SCALE GENOMIC DNA]</scope>
</reference>
<reference key="6">
    <citation type="journal article" date="2004" name="Genome Res.">
        <title>The status, quality, and expansion of the NIH full-length cDNA project: the Mammalian Gene Collection (MGC).</title>
        <authorList>
            <consortium name="The MGC Project Team"/>
        </authorList>
    </citation>
    <scope>NUCLEOTIDE SEQUENCE [LARGE SCALE MRNA] (ISOFORM 1)</scope>
    <source>
        <tissue>Brain</tissue>
        <tissue>Testis</tissue>
    </source>
</reference>
<reference key="7">
    <citation type="journal article" date="2000" name="J. Biol. Chem.">
        <title>Nuclear transport of human DDB protein induced by ultraviolet light.</title>
        <authorList>
            <person name="Liu W."/>
            <person name="Nichols A.F."/>
            <person name="Graham J.A."/>
            <person name="Dualan R."/>
            <person name="Abbas A."/>
            <person name="Linn S."/>
        </authorList>
    </citation>
    <scope>NUCLEOTIDE SEQUENCE [MRNA] OF 356-592 (ISOFORM 1)</scope>
    <scope>INTERACTION WITH DDB1</scope>
</reference>
<reference key="8">
    <citation type="journal article" date="1999" name="Int. J. Cancer">
        <title>Antigens recognized by autologous antibody in patients with renal-cell carcinoma.</title>
        <authorList>
            <person name="Scanlan M.J."/>
            <person name="Gordan J.D."/>
            <person name="Williamson B."/>
            <person name="Stockert E."/>
            <person name="Bander N.H."/>
            <person name="Jongeneel C.V."/>
            <person name="Gure A.O."/>
            <person name="Jaeger D."/>
            <person name="Jaeger E."/>
            <person name="Knuth A."/>
            <person name="Chen Y.-T."/>
            <person name="Old L.J."/>
        </authorList>
    </citation>
    <scope>IDENTIFICATION AS A RENAL CANCER ANTIGEN</scope>
    <source>
        <tissue>Renal cell carcinoma</tissue>
    </source>
</reference>
<reference key="9">
    <citation type="journal article" date="2008" name="Proc. Natl. Acad. Sci. U.S.A.">
        <title>A quantitative atlas of mitotic phosphorylation.</title>
        <authorList>
            <person name="Dephoure N."/>
            <person name="Zhou C."/>
            <person name="Villen J."/>
            <person name="Beausoleil S.A."/>
            <person name="Bakalarski C.E."/>
            <person name="Elledge S.J."/>
            <person name="Gygi S.P."/>
        </authorList>
    </citation>
    <scope>PHOSPHORYLATION [LARGE SCALE ANALYSIS] AT SER-52</scope>
    <scope>IDENTIFICATION BY MASS SPECTROMETRY [LARGE SCALE ANALYSIS]</scope>
    <source>
        <tissue>Cervix carcinoma</tissue>
    </source>
</reference>
<reference key="10">
    <citation type="journal article" date="2009" name="Anal. Chem.">
        <title>Lys-N and trypsin cover complementary parts of the phosphoproteome in a refined SCX-based approach.</title>
        <authorList>
            <person name="Gauci S."/>
            <person name="Helbig A.O."/>
            <person name="Slijper M."/>
            <person name="Krijgsveld J."/>
            <person name="Heck A.J."/>
            <person name="Mohammed S."/>
        </authorList>
    </citation>
    <scope>IDENTIFICATION BY MASS SPECTROMETRY [LARGE SCALE ANALYSIS]</scope>
</reference>
<reference key="11">
    <citation type="journal article" date="2010" name="Sci. Signal.">
        <title>Quantitative phosphoproteomics reveals widespread full phosphorylation site occupancy during mitosis.</title>
        <authorList>
            <person name="Olsen J.V."/>
            <person name="Vermeulen M."/>
            <person name="Santamaria A."/>
            <person name="Kumar C."/>
            <person name="Miller M.L."/>
            <person name="Jensen L.J."/>
            <person name="Gnad F."/>
            <person name="Cox J."/>
            <person name="Jensen T.S."/>
            <person name="Nigg E.A."/>
            <person name="Brunak S."/>
            <person name="Mann M."/>
        </authorList>
    </citation>
    <scope>IDENTIFICATION BY MASS SPECTROMETRY [LARGE SCALE ANALYSIS]</scope>
    <source>
        <tissue>Cervix carcinoma</tissue>
    </source>
</reference>
<reference key="12">
    <citation type="journal article" date="2011" name="Sci. Signal.">
        <title>System-wide temporal characterization of the proteome and phosphoproteome of human embryonic stem cell differentiation.</title>
        <authorList>
            <person name="Rigbolt K.T."/>
            <person name="Prokhorova T.A."/>
            <person name="Akimov V."/>
            <person name="Henningsen J."/>
            <person name="Johansen P.T."/>
            <person name="Kratchmarova I."/>
            <person name="Kassem M."/>
            <person name="Mann M."/>
            <person name="Olsen J.V."/>
            <person name="Blagoev B."/>
        </authorList>
    </citation>
    <scope>PHOSPHORYLATION [LARGE SCALE ANALYSIS] AT SER-119</scope>
    <scope>IDENTIFICATION BY MASS SPECTROMETRY [LARGE SCALE ANALYSIS]</scope>
</reference>
<reference key="13">
    <citation type="journal article" date="2013" name="J. Proteome Res.">
        <title>Toward a comprehensive characterization of a human cancer cell phosphoproteome.</title>
        <authorList>
            <person name="Zhou H."/>
            <person name="Di Palma S."/>
            <person name="Preisinger C."/>
            <person name="Peng M."/>
            <person name="Polat A.N."/>
            <person name="Heck A.J."/>
            <person name="Mohammed S."/>
        </authorList>
    </citation>
    <scope>PHOSPHORYLATION [LARGE SCALE ANALYSIS] AT SER-52; SER-97 AND SER-117</scope>
    <scope>IDENTIFICATION BY MASS SPECTROMETRY [LARGE SCALE ANALYSIS]</scope>
    <source>
        <tissue>Cervix carcinoma</tissue>
        <tissue>Erythroleukemia</tissue>
    </source>
</reference>
<reference key="14">
    <citation type="journal article" date="2014" name="J. Proteomics">
        <title>An enzyme assisted RP-RPLC approach for in-depth analysis of human liver phosphoproteome.</title>
        <authorList>
            <person name="Bian Y."/>
            <person name="Song C."/>
            <person name="Cheng K."/>
            <person name="Dong M."/>
            <person name="Wang F."/>
            <person name="Huang J."/>
            <person name="Sun D."/>
            <person name="Wang L."/>
            <person name="Ye M."/>
            <person name="Zou H."/>
        </authorList>
    </citation>
    <scope>IDENTIFICATION BY MASS SPECTROMETRY [LARGE SCALE ANALYSIS]</scope>
    <source>
        <tissue>Liver</tissue>
    </source>
</reference>
<feature type="chain" id="PRO_0000055825" description="BRCA1-associated protein">
    <location>
        <begin position="1"/>
        <end position="592"/>
    </location>
</feature>
<feature type="zinc finger region" description="RING-type" evidence="2 10">
    <location>
        <begin position="264"/>
        <end position="304"/>
    </location>
</feature>
<feature type="zinc finger region" description="UBP-type; degenerate" evidence="3">
    <location>
        <begin position="301"/>
        <end position="393"/>
    </location>
</feature>
<feature type="region of interest" description="Disordered" evidence="4">
    <location>
        <begin position="78"/>
        <end position="124"/>
    </location>
</feature>
<feature type="region of interest" description="Disordered" evidence="4">
    <location>
        <begin position="565"/>
        <end position="592"/>
    </location>
</feature>
<feature type="coiled-coil region" evidence="1">
    <location>
        <begin position="429"/>
        <end position="537"/>
    </location>
</feature>
<feature type="compositionally biased region" description="Basic and acidic residues" evidence="4">
    <location>
        <begin position="80"/>
        <end position="94"/>
    </location>
</feature>
<feature type="compositionally biased region" description="Basic residues" evidence="4">
    <location>
        <begin position="582"/>
        <end position="592"/>
    </location>
</feature>
<feature type="binding site" evidence="3">
    <location>
        <position position="317"/>
    </location>
    <ligand>
        <name>Zn(2+)</name>
        <dbReference type="ChEBI" id="CHEBI:29105"/>
        <label>1</label>
    </ligand>
</feature>
<feature type="binding site" evidence="3">
    <location>
        <position position="320"/>
    </location>
    <ligand>
        <name>Zn(2+)</name>
        <dbReference type="ChEBI" id="CHEBI:29105"/>
        <label>1</label>
    </ligand>
</feature>
<feature type="binding site" evidence="3">
    <location>
        <position position="329"/>
    </location>
    <ligand>
        <name>Zn(2+)</name>
        <dbReference type="ChEBI" id="CHEBI:29105"/>
        <label>2</label>
    </ligand>
</feature>
<feature type="binding site" evidence="3">
    <location>
        <position position="332"/>
    </location>
    <ligand>
        <name>Zn(2+)</name>
        <dbReference type="ChEBI" id="CHEBI:29105"/>
        <label>2</label>
    </ligand>
</feature>
<feature type="binding site" evidence="3">
    <location>
        <position position="337"/>
    </location>
    <ligand>
        <name>Zn(2+)</name>
        <dbReference type="ChEBI" id="CHEBI:29105"/>
        <label>1</label>
    </ligand>
</feature>
<feature type="binding site" evidence="3">
    <location>
        <position position="344"/>
    </location>
    <ligand>
        <name>Zn(2+)</name>
        <dbReference type="ChEBI" id="CHEBI:29105"/>
        <label>1</label>
    </ligand>
</feature>
<feature type="binding site" evidence="3">
    <location>
        <position position="348"/>
    </location>
    <ligand>
        <name>Zn(2+)</name>
        <dbReference type="ChEBI" id="CHEBI:29105"/>
        <label>2</label>
    </ligand>
</feature>
<feature type="binding site" evidence="3">
    <location>
        <position position="354"/>
    </location>
    <ligand>
        <name>Zn(2+)</name>
        <dbReference type="ChEBI" id="CHEBI:29105"/>
        <label>2</label>
    </ligand>
</feature>
<feature type="modified residue" description="Phosphoserine" evidence="13 15">
    <location>
        <position position="52"/>
    </location>
</feature>
<feature type="modified residue" description="Phosphoserine" evidence="15">
    <location>
        <position position="97"/>
    </location>
</feature>
<feature type="modified residue" description="Phosphoserine" evidence="15">
    <location>
        <position position="117"/>
    </location>
</feature>
<feature type="modified residue" description="Phosphoserine" evidence="14">
    <location>
        <position position="119"/>
    </location>
</feature>
<feature type="splice variant" id="VSP_055881" description="In isoform 2." evidence="9">
    <location>
        <begin position="1"/>
        <end position="141"/>
    </location>
</feature>
<feature type="splice variant" id="VSP_055882" description="In isoform 2." evidence="9">
    <location>
        <begin position="212"/>
        <end position="249"/>
    </location>
</feature>
<feature type="mutagenesis site" description="Loss of E3 ubiquitin-protein ligase activity." evidence="6">
    <original>C</original>
    <variation>A</variation>
    <location>
        <position position="264"/>
    </location>
</feature>
<feature type="sequence conflict" description="In Ref. 1; AAC24200 and 2; AAP93638." evidence="10" ref="1 2">
    <original>E</original>
    <variation>D</variation>
    <location>
        <position position="186"/>
    </location>
</feature>
<feature type="sequence conflict" description="In Ref. 7; AAB88538." evidence="10" ref="7">
    <original>Y</original>
    <variation>H</variation>
    <location>
        <position position="356"/>
    </location>
</feature>
<gene>
    <name evidence="12" type="primary">BRAP</name>
    <name type="synonym">RNF52</name>
</gene>
<name>BRAP_HUMAN</name>
<sequence length="592" mass="67305">MSVSLVVIRLELAEHSPVPAGFGFSAAAGEMSDEEIKKTTLASAVACLEGKSPGEKVAIIHQHLGRREMTDVIIETMKSNPDELKTTVEERKSSEASPTAQRSKDHSKECINAAPDSPSKQLPDQISFFSGNPSVEIVHGIMHLYKTNKMTSLKEDVRRSAMLCILTVPAAMTSHDLMKFVAPFNEVIEQMKIIRDSTPNQYMVLIKFRAQADADSFYMTCNGRQFNSIEDDVCQLVYVERAEVLKSEDGASLPVMDLTELPKCTVCLERMDESVNGILTTLCNHSFHSQCLQRWDDTTCPVCRYCQTPEPVEENKCFECGVQENLWICLICGHIGCGRYVSRHAYKHFEETQHTYAMQLTNHRVWDYAGDNYVHRLVASKTDGKIVQYECEGDTCQEEKIDALQLEYSYLLTSQLESQRIYWENKIVRIEKDTAEEINNMKTKFKETIEKCDNLEHKLNDLLKEKQSVERKCTQLNTKVAKLTNELKEEQEMNKCLRANQVLLQNKLKEEERVLKETCDQKDLQITEIQEQLRDVMFYLETQQKINHLPAETRQEIQEGQINIAMASASSPASSGGSGKLPSRKGRSKRGK</sequence>
<proteinExistence type="evidence at protein level"/>
<protein>
    <recommendedName>
        <fullName>BRCA1-associated protein</fullName>
        <ecNumber evidence="6">2.3.2.27</ecNumber>
    </recommendedName>
    <alternativeName>
        <fullName>BRAP2</fullName>
    </alternativeName>
    <alternativeName>
        <fullName>Impedes mitogenic signal propagation</fullName>
        <shortName>IMP</shortName>
    </alternativeName>
    <alternativeName>
        <fullName>RING finger protein 52</fullName>
    </alternativeName>
    <alternativeName>
        <fullName evidence="10">RING-type E3 ubiquitin transferase BRAP2</fullName>
    </alternativeName>
    <alternativeName>
        <fullName>Renal carcinoma antigen NY-REN-63</fullName>
    </alternativeName>
</protein>